<sequence>MTLLGTALRPAATRVMLLGAGELGKEVAIECQRLGIEVIAVDRYPDAPAMHVAHRSHVINMLDGEALRHVITEEKPHYIVPEIEAIATDTLRELEDEGLNVVPCARATQLTMNREGIRRLAAEELGLPTSTYRFADSEASFHDAVAAVGFPCIVKPVMSSSGKGQSFIRSAEQLAQAWEYAQQGGRAGAGRVIVEGVVKFDFEITLLTVSAVDGVHFCAPVGHRQQDGDYRESWQPQQMSELALKRAQEIARHVVLALGGHGLFGVELFVCGDEVIFSEVSPRPHDTGMVTLISQDLSEFALHVRAFLGMPIGAIRQYGPAASAVILPQLTSQNVTFDDVHAAVGAGVQVRLFGKPEIDGTRRLGVALATGENVEEAVIRAKKAASRVTVKG</sequence>
<dbReference type="EC" id="6.3.1.21" evidence="1"/>
<dbReference type="EMBL" id="AE017220">
    <property type="protein sequence ID" value="AAX65794.1"/>
    <property type="molecule type" value="Genomic_DNA"/>
</dbReference>
<dbReference type="RefSeq" id="WP_000173416.1">
    <property type="nucleotide sequence ID" value="NC_006905.1"/>
</dbReference>
<dbReference type="SMR" id="Q57NB7"/>
<dbReference type="KEGG" id="sec:SCH_1888"/>
<dbReference type="HOGENOM" id="CLU_011534_1_3_6"/>
<dbReference type="UniPathway" id="UPA00074">
    <property type="reaction ID" value="UER00127"/>
</dbReference>
<dbReference type="Proteomes" id="UP000000538">
    <property type="component" value="Chromosome"/>
</dbReference>
<dbReference type="GO" id="GO:0005829">
    <property type="term" value="C:cytosol"/>
    <property type="evidence" value="ECO:0007669"/>
    <property type="project" value="TreeGrafter"/>
</dbReference>
<dbReference type="GO" id="GO:0005524">
    <property type="term" value="F:ATP binding"/>
    <property type="evidence" value="ECO:0007669"/>
    <property type="project" value="UniProtKB-UniRule"/>
</dbReference>
<dbReference type="GO" id="GO:0000287">
    <property type="term" value="F:magnesium ion binding"/>
    <property type="evidence" value="ECO:0007669"/>
    <property type="project" value="InterPro"/>
</dbReference>
<dbReference type="GO" id="GO:0043815">
    <property type="term" value="F:phosphoribosylglycinamide formyltransferase 2 activity"/>
    <property type="evidence" value="ECO:0007669"/>
    <property type="project" value="UniProtKB-UniRule"/>
</dbReference>
<dbReference type="GO" id="GO:0004644">
    <property type="term" value="F:phosphoribosylglycinamide formyltransferase activity"/>
    <property type="evidence" value="ECO:0007669"/>
    <property type="project" value="InterPro"/>
</dbReference>
<dbReference type="GO" id="GO:0006189">
    <property type="term" value="P:'de novo' IMP biosynthetic process"/>
    <property type="evidence" value="ECO:0007669"/>
    <property type="project" value="UniProtKB-UniRule"/>
</dbReference>
<dbReference type="FunFam" id="3.30.1490.20:FF:000013">
    <property type="entry name" value="Formate-dependent phosphoribosylglycinamide formyltransferase"/>
    <property type="match status" value="1"/>
</dbReference>
<dbReference type="FunFam" id="3.30.470.20:FF:000027">
    <property type="entry name" value="Formate-dependent phosphoribosylglycinamide formyltransferase"/>
    <property type="match status" value="1"/>
</dbReference>
<dbReference type="FunFam" id="3.40.50.20:FF:000007">
    <property type="entry name" value="Formate-dependent phosphoribosylglycinamide formyltransferase"/>
    <property type="match status" value="1"/>
</dbReference>
<dbReference type="Gene3D" id="3.40.50.20">
    <property type="match status" value="1"/>
</dbReference>
<dbReference type="Gene3D" id="3.30.1490.20">
    <property type="entry name" value="ATP-grasp fold, A domain"/>
    <property type="match status" value="1"/>
</dbReference>
<dbReference type="Gene3D" id="3.30.470.20">
    <property type="entry name" value="ATP-grasp fold, B domain"/>
    <property type="match status" value="1"/>
</dbReference>
<dbReference type="HAMAP" id="MF_01643">
    <property type="entry name" value="PurT"/>
    <property type="match status" value="1"/>
</dbReference>
<dbReference type="InterPro" id="IPR011761">
    <property type="entry name" value="ATP-grasp"/>
</dbReference>
<dbReference type="InterPro" id="IPR003135">
    <property type="entry name" value="ATP-grasp_carboxylate-amine"/>
</dbReference>
<dbReference type="InterPro" id="IPR013815">
    <property type="entry name" value="ATP_grasp_subdomain_1"/>
</dbReference>
<dbReference type="InterPro" id="IPR016185">
    <property type="entry name" value="PreATP-grasp_dom_sf"/>
</dbReference>
<dbReference type="InterPro" id="IPR005862">
    <property type="entry name" value="PurT"/>
</dbReference>
<dbReference type="InterPro" id="IPR054350">
    <property type="entry name" value="PurT/PurK_preATP-grasp"/>
</dbReference>
<dbReference type="InterPro" id="IPR048740">
    <property type="entry name" value="PurT_C"/>
</dbReference>
<dbReference type="InterPro" id="IPR011054">
    <property type="entry name" value="Rudment_hybrid_motif"/>
</dbReference>
<dbReference type="NCBIfam" id="NF006766">
    <property type="entry name" value="PRK09288.1"/>
    <property type="match status" value="1"/>
</dbReference>
<dbReference type="NCBIfam" id="TIGR01142">
    <property type="entry name" value="purT"/>
    <property type="match status" value="1"/>
</dbReference>
<dbReference type="PANTHER" id="PTHR43055">
    <property type="entry name" value="FORMATE-DEPENDENT PHOSPHORIBOSYLGLYCINAMIDE FORMYLTRANSFERASE"/>
    <property type="match status" value="1"/>
</dbReference>
<dbReference type="PANTHER" id="PTHR43055:SF1">
    <property type="entry name" value="FORMATE-DEPENDENT PHOSPHORIBOSYLGLYCINAMIDE FORMYLTRANSFERASE"/>
    <property type="match status" value="1"/>
</dbReference>
<dbReference type="Pfam" id="PF02222">
    <property type="entry name" value="ATP-grasp"/>
    <property type="match status" value="1"/>
</dbReference>
<dbReference type="Pfam" id="PF21244">
    <property type="entry name" value="PurT_C"/>
    <property type="match status" value="1"/>
</dbReference>
<dbReference type="Pfam" id="PF22660">
    <property type="entry name" value="RS_preATP-grasp-like"/>
    <property type="match status" value="1"/>
</dbReference>
<dbReference type="SUPFAM" id="SSF56059">
    <property type="entry name" value="Glutathione synthetase ATP-binding domain-like"/>
    <property type="match status" value="1"/>
</dbReference>
<dbReference type="SUPFAM" id="SSF52440">
    <property type="entry name" value="PreATP-grasp domain"/>
    <property type="match status" value="1"/>
</dbReference>
<dbReference type="SUPFAM" id="SSF51246">
    <property type="entry name" value="Rudiment single hybrid motif"/>
    <property type="match status" value="1"/>
</dbReference>
<dbReference type="PROSITE" id="PS50975">
    <property type="entry name" value="ATP_GRASP"/>
    <property type="match status" value="1"/>
</dbReference>
<reference key="1">
    <citation type="journal article" date="2005" name="Nucleic Acids Res.">
        <title>The genome sequence of Salmonella enterica serovar Choleraesuis, a highly invasive and resistant zoonotic pathogen.</title>
        <authorList>
            <person name="Chiu C.-H."/>
            <person name="Tang P."/>
            <person name="Chu C."/>
            <person name="Hu S."/>
            <person name="Bao Q."/>
            <person name="Yu J."/>
            <person name="Chou Y.-Y."/>
            <person name="Wang H.-S."/>
            <person name="Lee Y.-S."/>
        </authorList>
    </citation>
    <scope>NUCLEOTIDE SEQUENCE [LARGE SCALE GENOMIC DNA]</scope>
    <source>
        <strain>SC-B67</strain>
    </source>
</reference>
<accession>Q57NB7</accession>
<organism>
    <name type="scientific">Salmonella choleraesuis (strain SC-B67)</name>
    <dbReference type="NCBI Taxonomy" id="321314"/>
    <lineage>
        <taxon>Bacteria</taxon>
        <taxon>Pseudomonadati</taxon>
        <taxon>Pseudomonadota</taxon>
        <taxon>Gammaproteobacteria</taxon>
        <taxon>Enterobacterales</taxon>
        <taxon>Enterobacteriaceae</taxon>
        <taxon>Salmonella</taxon>
    </lineage>
</organism>
<gene>
    <name evidence="1" type="primary">purT</name>
    <name type="ordered locus">SCH_1888</name>
</gene>
<feature type="chain" id="PRO_0000319224" description="Formate-dependent phosphoribosylglycinamide formyltransferase">
    <location>
        <begin position="1"/>
        <end position="392"/>
    </location>
</feature>
<feature type="domain" description="ATP-grasp" evidence="1">
    <location>
        <begin position="119"/>
        <end position="308"/>
    </location>
</feature>
<feature type="binding site" evidence="1">
    <location>
        <begin position="22"/>
        <end position="23"/>
    </location>
    <ligand>
        <name>N(1)-(5-phospho-beta-D-ribosyl)glycinamide</name>
        <dbReference type="ChEBI" id="CHEBI:143788"/>
    </ligand>
</feature>
<feature type="binding site" evidence="1">
    <location>
        <position position="82"/>
    </location>
    <ligand>
        <name>N(1)-(5-phospho-beta-D-ribosyl)glycinamide</name>
        <dbReference type="ChEBI" id="CHEBI:143788"/>
    </ligand>
</feature>
<feature type="binding site" evidence="1">
    <location>
        <position position="114"/>
    </location>
    <ligand>
        <name>ATP</name>
        <dbReference type="ChEBI" id="CHEBI:30616"/>
    </ligand>
</feature>
<feature type="binding site" evidence="1">
    <location>
        <position position="155"/>
    </location>
    <ligand>
        <name>ATP</name>
        <dbReference type="ChEBI" id="CHEBI:30616"/>
    </ligand>
</feature>
<feature type="binding site" evidence="1">
    <location>
        <begin position="160"/>
        <end position="165"/>
    </location>
    <ligand>
        <name>ATP</name>
        <dbReference type="ChEBI" id="CHEBI:30616"/>
    </ligand>
</feature>
<feature type="binding site" evidence="1">
    <location>
        <begin position="195"/>
        <end position="198"/>
    </location>
    <ligand>
        <name>ATP</name>
        <dbReference type="ChEBI" id="CHEBI:30616"/>
    </ligand>
</feature>
<feature type="binding site" evidence="1">
    <location>
        <position position="203"/>
    </location>
    <ligand>
        <name>ATP</name>
        <dbReference type="ChEBI" id="CHEBI:30616"/>
    </ligand>
</feature>
<feature type="binding site" evidence="1">
    <location>
        <position position="267"/>
    </location>
    <ligand>
        <name>Mg(2+)</name>
        <dbReference type="ChEBI" id="CHEBI:18420"/>
    </ligand>
</feature>
<feature type="binding site" evidence="1">
    <location>
        <position position="279"/>
    </location>
    <ligand>
        <name>Mg(2+)</name>
        <dbReference type="ChEBI" id="CHEBI:18420"/>
    </ligand>
</feature>
<feature type="binding site" evidence="1">
    <location>
        <position position="286"/>
    </location>
    <ligand>
        <name>N(1)-(5-phospho-beta-D-ribosyl)glycinamide</name>
        <dbReference type="ChEBI" id="CHEBI:143788"/>
    </ligand>
</feature>
<feature type="binding site" evidence="1">
    <location>
        <position position="355"/>
    </location>
    <ligand>
        <name>N(1)-(5-phospho-beta-D-ribosyl)glycinamide</name>
        <dbReference type="ChEBI" id="CHEBI:143788"/>
    </ligand>
</feature>
<feature type="binding site" evidence="1">
    <location>
        <begin position="362"/>
        <end position="363"/>
    </location>
    <ligand>
        <name>N(1)-(5-phospho-beta-D-ribosyl)glycinamide</name>
        <dbReference type="ChEBI" id="CHEBI:143788"/>
    </ligand>
</feature>
<evidence type="ECO:0000255" key="1">
    <source>
        <dbReference type="HAMAP-Rule" id="MF_01643"/>
    </source>
</evidence>
<comment type="function">
    <text evidence="1">Involved in the de novo purine biosynthesis. Catalyzes the transfer of formate to 5-phospho-ribosyl-glycinamide (GAR), producing 5-phospho-ribosyl-N-formylglycinamide (FGAR). Formate is provided by PurU via hydrolysis of 10-formyl-tetrahydrofolate.</text>
</comment>
<comment type="catalytic activity">
    <reaction evidence="1">
        <text>N(1)-(5-phospho-beta-D-ribosyl)glycinamide + formate + ATP = N(2)-formyl-N(1)-(5-phospho-beta-D-ribosyl)glycinamide + ADP + phosphate + H(+)</text>
        <dbReference type="Rhea" id="RHEA:24829"/>
        <dbReference type="ChEBI" id="CHEBI:15378"/>
        <dbReference type="ChEBI" id="CHEBI:15740"/>
        <dbReference type="ChEBI" id="CHEBI:30616"/>
        <dbReference type="ChEBI" id="CHEBI:43474"/>
        <dbReference type="ChEBI" id="CHEBI:143788"/>
        <dbReference type="ChEBI" id="CHEBI:147286"/>
        <dbReference type="ChEBI" id="CHEBI:456216"/>
        <dbReference type="EC" id="6.3.1.21"/>
    </reaction>
    <physiologicalReaction direction="left-to-right" evidence="1">
        <dbReference type="Rhea" id="RHEA:24830"/>
    </physiologicalReaction>
</comment>
<comment type="pathway">
    <text evidence="1">Purine metabolism; IMP biosynthesis via de novo pathway; N(2)-formyl-N(1)-(5-phospho-D-ribosyl)glycinamide from N(1)-(5-phospho-D-ribosyl)glycinamide (formate route): step 1/1.</text>
</comment>
<comment type="subunit">
    <text evidence="1">Homodimer.</text>
</comment>
<comment type="similarity">
    <text evidence="1">Belongs to the PurK/PurT family.</text>
</comment>
<name>PURT_SALCH</name>
<proteinExistence type="inferred from homology"/>
<protein>
    <recommendedName>
        <fullName evidence="1">Formate-dependent phosphoribosylglycinamide formyltransferase</fullName>
        <ecNumber evidence="1">6.3.1.21</ecNumber>
    </recommendedName>
    <alternativeName>
        <fullName evidence="1">5'-phosphoribosylglycinamide transformylase 2</fullName>
    </alternativeName>
    <alternativeName>
        <fullName evidence="1">Formate-dependent GAR transformylase</fullName>
    </alternativeName>
    <alternativeName>
        <fullName evidence="1">GAR transformylase 2</fullName>
        <shortName evidence="1">GART 2</shortName>
    </alternativeName>
    <alternativeName>
        <fullName evidence="1">Non-folate glycinamide ribonucleotide transformylase</fullName>
    </alternativeName>
    <alternativeName>
        <fullName evidence="1">Phosphoribosylglycinamide formyltransferase 2</fullName>
    </alternativeName>
</protein>
<keyword id="KW-0067">ATP-binding</keyword>
<keyword id="KW-0436">Ligase</keyword>
<keyword id="KW-0460">Magnesium</keyword>
<keyword id="KW-0479">Metal-binding</keyword>
<keyword id="KW-0547">Nucleotide-binding</keyword>
<keyword id="KW-0658">Purine biosynthesis</keyword>